<keyword id="KW-0010">Activator</keyword>
<keyword id="KW-1005">Bacterial flagellum biogenesis</keyword>
<keyword id="KW-0963">Cytoplasm</keyword>
<keyword id="KW-1015">Disulfide bond</keyword>
<keyword id="KW-0238">DNA-binding</keyword>
<keyword id="KW-1185">Reference proteome</keyword>
<keyword id="KW-0804">Transcription</keyword>
<keyword id="KW-0805">Transcription regulation</keyword>
<proteinExistence type="inferred from homology"/>
<reference key="1">
    <citation type="journal article" date="2004" name="Proc. Natl. Acad. Sci. U.S.A.">
        <title>Genome sequence of the enterobacterial phytopathogen Erwinia carotovora subsp. atroseptica and characterization of virulence factors.</title>
        <authorList>
            <person name="Bell K.S."/>
            <person name="Sebaihia M."/>
            <person name="Pritchard L."/>
            <person name="Holden M.T.G."/>
            <person name="Hyman L.J."/>
            <person name="Holeva M.C."/>
            <person name="Thomson N.R."/>
            <person name="Bentley S.D."/>
            <person name="Churcher L.J.C."/>
            <person name="Mungall K."/>
            <person name="Atkin R."/>
            <person name="Bason N."/>
            <person name="Brooks K."/>
            <person name="Chillingworth T."/>
            <person name="Clark K."/>
            <person name="Doggett J."/>
            <person name="Fraser A."/>
            <person name="Hance Z."/>
            <person name="Hauser H."/>
            <person name="Jagels K."/>
            <person name="Moule S."/>
            <person name="Norbertczak H."/>
            <person name="Ormond D."/>
            <person name="Price C."/>
            <person name="Quail M.A."/>
            <person name="Sanders M."/>
            <person name="Walker D."/>
            <person name="Whitehead S."/>
            <person name="Salmond G.P.C."/>
            <person name="Birch P.R.J."/>
            <person name="Parkhill J."/>
            <person name="Toth I.K."/>
        </authorList>
    </citation>
    <scope>NUCLEOTIDE SEQUENCE [LARGE SCALE GENOMIC DNA]</scope>
    <source>
        <strain>SCRI 1043 / ATCC BAA-672</strain>
    </source>
</reference>
<sequence length="119" mass="13593">MGNMGTSELLKHIYDINLSYLLLAQRLINDEKASAMFRLGINDEMANILMQLTLPQMVKLAETNQLICHFRFNDHNTIKVLTQESRVDDLQQIHTGILLSSSLLQQLASKEENLPKKRA</sequence>
<protein>
    <recommendedName>
        <fullName evidence="1">Flagellar transcriptional regulator FlhD</fullName>
    </recommendedName>
</protein>
<dbReference type="EMBL" id="BX950851">
    <property type="protein sequence ID" value="CAG74591.1"/>
    <property type="molecule type" value="Genomic_DNA"/>
</dbReference>
<dbReference type="SMR" id="Q6D6J5"/>
<dbReference type="STRING" id="218491.ECA1685"/>
<dbReference type="KEGG" id="eca:ECA1685"/>
<dbReference type="eggNOG" id="ENOG5031P80">
    <property type="taxonomic scope" value="Bacteria"/>
</dbReference>
<dbReference type="HOGENOM" id="CLU_144160_0_0_6"/>
<dbReference type="Proteomes" id="UP000007966">
    <property type="component" value="Chromosome"/>
</dbReference>
<dbReference type="GO" id="GO:0005737">
    <property type="term" value="C:cytoplasm"/>
    <property type="evidence" value="ECO:0007669"/>
    <property type="project" value="UniProtKB-SubCell"/>
</dbReference>
<dbReference type="GO" id="GO:0003677">
    <property type="term" value="F:DNA binding"/>
    <property type="evidence" value="ECO:0007669"/>
    <property type="project" value="UniProtKB-UniRule"/>
</dbReference>
<dbReference type="GO" id="GO:0044780">
    <property type="term" value="P:bacterial-type flagellum assembly"/>
    <property type="evidence" value="ECO:0007669"/>
    <property type="project" value="InterPro"/>
</dbReference>
<dbReference type="GO" id="GO:0045893">
    <property type="term" value="P:positive regulation of DNA-templated transcription"/>
    <property type="evidence" value="ECO:0007669"/>
    <property type="project" value="InterPro"/>
</dbReference>
<dbReference type="GO" id="GO:1902208">
    <property type="term" value="P:regulation of bacterial-type flagellum assembly"/>
    <property type="evidence" value="ECO:0007669"/>
    <property type="project" value="UniProtKB-UniRule"/>
</dbReference>
<dbReference type="Gene3D" id="1.10.4000.10">
    <property type="entry name" value="Flagellar transcriptional activator FlhD"/>
    <property type="match status" value="1"/>
</dbReference>
<dbReference type="HAMAP" id="MF_00725">
    <property type="entry name" value="FlhD"/>
    <property type="match status" value="1"/>
</dbReference>
<dbReference type="InterPro" id="IPR023559">
    <property type="entry name" value="Flagellar_FlhD"/>
</dbReference>
<dbReference type="InterPro" id="IPR036194">
    <property type="entry name" value="FlhD_sf"/>
</dbReference>
<dbReference type="NCBIfam" id="NF002783">
    <property type="entry name" value="PRK02909.1-1"/>
    <property type="match status" value="1"/>
</dbReference>
<dbReference type="Pfam" id="PF05247">
    <property type="entry name" value="FlhD"/>
    <property type="match status" value="1"/>
</dbReference>
<dbReference type="SUPFAM" id="SSF63592">
    <property type="entry name" value="Flagellar transcriptional activator FlhD"/>
    <property type="match status" value="1"/>
</dbReference>
<gene>
    <name evidence="1" type="primary">flhD</name>
    <name type="synonym">flbB</name>
    <name type="ordered locus">ECA1685</name>
</gene>
<name>FLHD_PECAS</name>
<comment type="function">
    <text evidence="1">Functions in complex with FlhC as a master transcriptional regulator that regulates transcription of several flagellar and non-flagellar operons by binding to their promoter region. Activates expression of class 2 flagellar genes, including fliA, which is a flagellum-specific sigma factor that turns on the class 3 genes. Also regulates genes whose products function in a variety of physiological pathways.</text>
</comment>
<comment type="subunit">
    <text evidence="1">Homodimer; disulfide-linked. Forms a heterohexamer composed of two FlhC and four FlhD subunits. Each FlhC binds a FlhD dimer, forming a heterotrimer, and a hexamer assembles by dimerization of two heterotrimers.</text>
</comment>
<comment type="subcellular location">
    <subcellularLocation>
        <location evidence="1">Cytoplasm</location>
    </subcellularLocation>
</comment>
<comment type="domain">
    <text evidence="1">The C-terminal region contains a putative helix-turn-helix (HTH) motif, suggesting that this region may bind DNA.</text>
</comment>
<comment type="similarity">
    <text evidence="1">Belongs to the FlhD family.</text>
</comment>
<accession>Q6D6J5</accession>
<evidence type="ECO:0000255" key="1">
    <source>
        <dbReference type="HAMAP-Rule" id="MF_00725"/>
    </source>
</evidence>
<organism>
    <name type="scientific">Pectobacterium atrosepticum (strain SCRI 1043 / ATCC BAA-672)</name>
    <name type="common">Erwinia carotovora subsp. atroseptica</name>
    <dbReference type="NCBI Taxonomy" id="218491"/>
    <lineage>
        <taxon>Bacteria</taxon>
        <taxon>Pseudomonadati</taxon>
        <taxon>Pseudomonadota</taxon>
        <taxon>Gammaproteobacteria</taxon>
        <taxon>Enterobacterales</taxon>
        <taxon>Pectobacteriaceae</taxon>
        <taxon>Pectobacterium</taxon>
    </lineage>
</organism>
<feature type="chain" id="PRO_0000182718" description="Flagellar transcriptional regulator FlhD">
    <location>
        <begin position="1"/>
        <end position="119"/>
    </location>
</feature>
<feature type="disulfide bond" description="Interchain" evidence="1">
    <location>
        <position position="68"/>
    </location>
</feature>